<sequence>MSKIIFMGTPDFSTKVLEMLIAEHEVIAVVTQPDRPVGRKKVMTPPPVKRVATKHQIPVYQPEKLKDSQELDVLLSLESDLIVTAAFGQLLPESLLNAPKLGAINVHASLLPKYRGGAPIHQAIIDGEEETGITIMYMVKKLDAGNIISQQSIRIEEEDNVGTMHDKLSFLGAELLKKTLPSIIDNTNDSIPQDDALATFASNIRREDERIDWNMSAQAIHNHIRGLSPWPVAYTTMNEKNLKLFSAFIVKGKKGNPGTIIEATKHELIIATGSDDAIALTEIQPAGKKRMKVTDYLSGVQESLVGKVLL</sequence>
<proteinExistence type="inferred from homology"/>
<organism>
    <name type="scientific">Staphylococcus epidermidis (strain ATCC 35984 / DSM 28319 / BCRC 17069 / CCUG 31568 / BM 3577 / RP62A)</name>
    <dbReference type="NCBI Taxonomy" id="176279"/>
    <lineage>
        <taxon>Bacteria</taxon>
        <taxon>Bacillati</taxon>
        <taxon>Bacillota</taxon>
        <taxon>Bacilli</taxon>
        <taxon>Bacillales</taxon>
        <taxon>Staphylococcaceae</taxon>
        <taxon>Staphylococcus</taxon>
    </lineage>
</organism>
<accession>Q5HPX5</accession>
<protein>
    <recommendedName>
        <fullName evidence="1">Methionyl-tRNA formyltransferase</fullName>
        <ecNumber evidence="1">2.1.2.9</ecNumber>
    </recommendedName>
</protein>
<feature type="chain" id="PRO_0000083052" description="Methionyl-tRNA formyltransferase">
    <location>
        <begin position="1"/>
        <end position="310"/>
    </location>
</feature>
<feature type="binding site" evidence="1">
    <location>
        <begin position="109"/>
        <end position="112"/>
    </location>
    <ligand>
        <name>(6S)-5,6,7,8-tetrahydrofolate</name>
        <dbReference type="ChEBI" id="CHEBI:57453"/>
    </ligand>
</feature>
<name>FMT_STAEQ</name>
<evidence type="ECO:0000255" key="1">
    <source>
        <dbReference type="HAMAP-Rule" id="MF_00182"/>
    </source>
</evidence>
<gene>
    <name evidence="1" type="primary">fmt</name>
    <name type="ordered locus">SERP0782</name>
</gene>
<reference key="1">
    <citation type="journal article" date="2005" name="J. Bacteriol.">
        <title>Insights on evolution of virulence and resistance from the complete genome analysis of an early methicillin-resistant Staphylococcus aureus strain and a biofilm-producing methicillin-resistant Staphylococcus epidermidis strain.</title>
        <authorList>
            <person name="Gill S.R."/>
            <person name="Fouts D.E."/>
            <person name="Archer G.L."/>
            <person name="Mongodin E.F."/>
            <person name="DeBoy R.T."/>
            <person name="Ravel J."/>
            <person name="Paulsen I.T."/>
            <person name="Kolonay J.F."/>
            <person name="Brinkac L.M."/>
            <person name="Beanan M.J."/>
            <person name="Dodson R.J."/>
            <person name="Daugherty S.C."/>
            <person name="Madupu R."/>
            <person name="Angiuoli S.V."/>
            <person name="Durkin A.S."/>
            <person name="Haft D.H."/>
            <person name="Vamathevan J.J."/>
            <person name="Khouri H."/>
            <person name="Utterback T.R."/>
            <person name="Lee C."/>
            <person name="Dimitrov G."/>
            <person name="Jiang L."/>
            <person name="Qin H."/>
            <person name="Weidman J."/>
            <person name="Tran K."/>
            <person name="Kang K.H."/>
            <person name="Hance I.R."/>
            <person name="Nelson K.E."/>
            <person name="Fraser C.M."/>
        </authorList>
    </citation>
    <scope>NUCLEOTIDE SEQUENCE [LARGE SCALE GENOMIC DNA]</scope>
    <source>
        <strain>ATCC 35984 / DSM 28319 / BCRC 17069 / CCUG 31568 / BM 3577 / RP62A</strain>
    </source>
</reference>
<comment type="function">
    <text evidence="1">Attaches a formyl group to the free amino group of methionyl-tRNA(fMet). The formyl group appears to play a dual role in the initiator identity of N-formylmethionyl-tRNA by promoting its recognition by IF2 and preventing the misappropriation of this tRNA by the elongation apparatus.</text>
</comment>
<comment type="catalytic activity">
    <reaction evidence="1">
        <text>L-methionyl-tRNA(fMet) + (6R)-10-formyltetrahydrofolate = N-formyl-L-methionyl-tRNA(fMet) + (6S)-5,6,7,8-tetrahydrofolate + H(+)</text>
        <dbReference type="Rhea" id="RHEA:24380"/>
        <dbReference type="Rhea" id="RHEA-COMP:9952"/>
        <dbReference type="Rhea" id="RHEA-COMP:9953"/>
        <dbReference type="ChEBI" id="CHEBI:15378"/>
        <dbReference type="ChEBI" id="CHEBI:57453"/>
        <dbReference type="ChEBI" id="CHEBI:78530"/>
        <dbReference type="ChEBI" id="CHEBI:78844"/>
        <dbReference type="ChEBI" id="CHEBI:195366"/>
        <dbReference type="EC" id="2.1.2.9"/>
    </reaction>
</comment>
<comment type="similarity">
    <text evidence="1">Belongs to the Fmt family.</text>
</comment>
<keyword id="KW-0648">Protein biosynthesis</keyword>
<keyword id="KW-1185">Reference proteome</keyword>
<keyword id="KW-0808">Transferase</keyword>
<dbReference type="EC" id="2.1.2.9" evidence="1"/>
<dbReference type="EMBL" id="CP000029">
    <property type="protein sequence ID" value="AAW54200.1"/>
    <property type="molecule type" value="Genomic_DNA"/>
</dbReference>
<dbReference type="RefSeq" id="WP_002446256.1">
    <property type="nucleotide sequence ID" value="NC_002976.3"/>
</dbReference>
<dbReference type="SMR" id="Q5HPX5"/>
<dbReference type="STRING" id="176279.SERP0782"/>
<dbReference type="KEGG" id="ser:SERP0782"/>
<dbReference type="eggNOG" id="COG0223">
    <property type="taxonomic scope" value="Bacteria"/>
</dbReference>
<dbReference type="HOGENOM" id="CLU_033347_1_1_9"/>
<dbReference type="Proteomes" id="UP000000531">
    <property type="component" value="Chromosome"/>
</dbReference>
<dbReference type="GO" id="GO:0005829">
    <property type="term" value="C:cytosol"/>
    <property type="evidence" value="ECO:0007669"/>
    <property type="project" value="TreeGrafter"/>
</dbReference>
<dbReference type="GO" id="GO:0004479">
    <property type="term" value="F:methionyl-tRNA formyltransferase activity"/>
    <property type="evidence" value="ECO:0007669"/>
    <property type="project" value="UniProtKB-UniRule"/>
</dbReference>
<dbReference type="CDD" id="cd08646">
    <property type="entry name" value="FMT_core_Met-tRNA-FMT_N"/>
    <property type="match status" value="1"/>
</dbReference>
<dbReference type="CDD" id="cd08704">
    <property type="entry name" value="Met_tRNA_FMT_C"/>
    <property type="match status" value="1"/>
</dbReference>
<dbReference type="FunFam" id="3.40.50.170:FF:000004">
    <property type="entry name" value="Methionyl-tRNA formyltransferase"/>
    <property type="match status" value="1"/>
</dbReference>
<dbReference type="Gene3D" id="3.10.25.10">
    <property type="entry name" value="Formyl transferase, C-terminal domain"/>
    <property type="match status" value="1"/>
</dbReference>
<dbReference type="Gene3D" id="3.40.50.170">
    <property type="entry name" value="Formyl transferase, N-terminal domain"/>
    <property type="match status" value="1"/>
</dbReference>
<dbReference type="HAMAP" id="MF_00182">
    <property type="entry name" value="Formyl_trans"/>
    <property type="match status" value="1"/>
</dbReference>
<dbReference type="InterPro" id="IPR005794">
    <property type="entry name" value="Fmt"/>
</dbReference>
<dbReference type="InterPro" id="IPR005793">
    <property type="entry name" value="Formyl_trans_C"/>
</dbReference>
<dbReference type="InterPro" id="IPR037022">
    <property type="entry name" value="Formyl_trans_C_sf"/>
</dbReference>
<dbReference type="InterPro" id="IPR002376">
    <property type="entry name" value="Formyl_transf_N"/>
</dbReference>
<dbReference type="InterPro" id="IPR036477">
    <property type="entry name" value="Formyl_transf_N_sf"/>
</dbReference>
<dbReference type="InterPro" id="IPR011034">
    <property type="entry name" value="Formyl_transferase-like_C_sf"/>
</dbReference>
<dbReference type="InterPro" id="IPR001555">
    <property type="entry name" value="GART_AS"/>
</dbReference>
<dbReference type="InterPro" id="IPR044135">
    <property type="entry name" value="Met-tRNA-FMT_C"/>
</dbReference>
<dbReference type="InterPro" id="IPR041711">
    <property type="entry name" value="Met-tRNA-FMT_N"/>
</dbReference>
<dbReference type="NCBIfam" id="TIGR00460">
    <property type="entry name" value="fmt"/>
    <property type="match status" value="1"/>
</dbReference>
<dbReference type="PANTHER" id="PTHR11138">
    <property type="entry name" value="METHIONYL-TRNA FORMYLTRANSFERASE"/>
    <property type="match status" value="1"/>
</dbReference>
<dbReference type="PANTHER" id="PTHR11138:SF5">
    <property type="entry name" value="METHIONYL-TRNA FORMYLTRANSFERASE, MITOCHONDRIAL"/>
    <property type="match status" value="1"/>
</dbReference>
<dbReference type="Pfam" id="PF02911">
    <property type="entry name" value="Formyl_trans_C"/>
    <property type="match status" value="1"/>
</dbReference>
<dbReference type="Pfam" id="PF00551">
    <property type="entry name" value="Formyl_trans_N"/>
    <property type="match status" value="1"/>
</dbReference>
<dbReference type="SUPFAM" id="SSF50486">
    <property type="entry name" value="FMT C-terminal domain-like"/>
    <property type="match status" value="1"/>
</dbReference>
<dbReference type="SUPFAM" id="SSF53328">
    <property type="entry name" value="Formyltransferase"/>
    <property type="match status" value="1"/>
</dbReference>
<dbReference type="PROSITE" id="PS00373">
    <property type="entry name" value="GART"/>
    <property type="match status" value="1"/>
</dbReference>